<protein>
    <recommendedName>
        <fullName evidence="1">Flagellar hook-basal body complex protein FliE</fullName>
    </recommendedName>
</protein>
<gene>
    <name evidence="1" type="primary">fliE</name>
    <name type="ordered locus">NGR_c02760</name>
</gene>
<accession>C3MG23</accession>
<feature type="chain" id="PRO_1000148053" description="Flagellar hook-basal body complex protein FliE">
    <location>
        <begin position="1"/>
        <end position="111"/>
    </location>
</feature>
<reference key="1">
    <citation type="journal article" date="2009" name="Appl. Environ. Microbiol.">
        <title>Rhizobium sp. strain NGR234 possesses a remarkable number of secretion systems.</title>
        <authorList>
            <person name="Schmeisser C."/>
            <person name="Liesegang H."/>
            <person name="Krysciak D."/>
            <person name="Bakkou N."/>
            <person name="Le Quere A."/>
            <person name="Wollherr A."/>
            <person name="Heinemeyer I."/>
            <person name="Morgenstern B."/>
            <person name="Pommerening-Roeser A."/>
            <person name="Flores M."/>
            <person name="Palacios R."/>
            <person name="Brenner S."/>
            <person name="Gottschalk G."/>
            <person name="Schmitz R.A."/>
            <person name="Broughton W.J."/>
            <person name="Perret X."/>
            <person name="Strittmatter A.W."/>
            <person name="Streit W.R."/>
        </authorList>
    </citation>
    <scope>NUCLEOTIDE SEQUENCE [LARGE SCALE GENOMIC DNA]</scope>
    <source>
        <strain>NBRC 101917 / NGR234</strain>
    </source>
</reference>
<comment type="subcellular location">
    <subcellularLocation>
        <location evidence="1">Bacterial flagellum basal body</location>
    </subcellularLocation>
</comment>
<comment type="similarity">
    <text evidence="1">Belongs to the FliE family.</text>
</comment>
<sequence>MIDAIQSVGAFSNLKEAEGTSLTASTALSLPSAGASAPQSQSFAEVLGTMTTDAIRSMKSAEGVSLQAIRGEANTREVVDAVMNAEQSLQTALAIRDKVVTAYLEIARMQI</sequence>
<proteinExistence type="inferred from homology"/>
<evidence type="ECO:0000255" key="1">
    <source>
        <dbReference type="HAMAP-Rule" id="MF_00724"/>
    </source>
</evidence>
<name>FLIE_SINFN</name>
<organism>
    <name type="scientific">Sinorhizobium fredii (strain NBRC 101917 / NGR234)</name>
    <dbReference type="NCBI Taxonomy" id="394"/>
    <lineage>
        <taxon>Bacteria</taxon>
        <taxon>Pseudomonadati</taxon>
        <taxon>Pseudomonadota</taxon>
        <taxon>Alphaproteobacteria</taxon>
        <taxon>Hyphomicrobiales</taxon>
        <taxon>Rhizobiaceae</taxon>
        <taxon>Sinorhizobium/Ensifer group</taxon>
        <taxon>Sinorhizobium</taxon>
    </lineage>
</organism>
<dbReference type="EMBL" id="CP001389">
    <property type="protein sequence ID" value="ACP24074.1"/>
    <property type="molecule type" value="Genomic_DNA"/>
</dbReference>
<dbReference type="RefSeq" id="WP_012706859.1">
    <property type="nucleotide sequence ID" value="NC_012587.1"/>
</dbReference>
<dbReference type="RefSeq" id="YP_002824827.1">
    <property type="nucleotide sequence ID" value="NC_012587.1"/>
</dbReference>
<dbReference type="SMR" id="C3MG23"/>
<dbReference type="STRING" id="394.NGR_c02760"/>
<dbReference type="KEGG" id="rhi:NGR_c02760"/>
<dbReference type="PATRIC" id="fig|394.7.peg.3077"/>
<dbReference type="eggNOG" id="COG1677">
    <property type="taxonomic scope" value="Bacteria"/>
</dbReference>
<dbReference type="HOGENOM" id="CLU_147249_2_0_5"/>
<dbReference type="OrthoDB" id="9812413at2"/>
<dbReference type="Proteomes" id="UP000001054">
    <property type="component" value="Chromosome"/>
</dbReference>
<dbReference type="GO" id="GO:0009425">
    <property type="term" value="C:bacterial-type flagellum basal body"/>
    <property type="evidence" value="ECO:0007669"/>
    <property type="project" value="UniProtKB-SubCell"/>
</dbReference>
<dbReference type="GO" id="GO:0003774">
    <property type="term" value="F:cytoskeletal motor activity"/>
    <property type="evidence" value="ECO:0007669"/>
    <property type="project" value="InterPro"/>
</dbReference>
<dbReference type="GO" id="GO:0005198">
    <property type="term" value="F:structural molecule activity"/>
    <property type="evidence" value="ECO:0007669"/>
    <property type="project" value="InterPro"/>
</dbReference>
<dbReference type="GO" id="GO:0071973">
    <property type="term" value="P:bacterial-type flagellum-dependent cell motility"/>
    <property type="evidence" value="ECO:0007669"/>
    <property type="project" value="InterPro"/>
</dbReference>
<dbReference type="HAMAP" id="MF_00724">
    <property type="entry name" value="FliE"/>
    <property type="match status" value="1"/>
</dbReference>
<dbReference type="InterPro" id="IPR001624">
    <property type="entry name" value="FliE"/>
</dbReference>
<dbReference type="PANTHER" id="PTHR34653">
    <property type="match status" value="1"/>
</dbReference>
<dbReference type="PANTHER" id="PTHR34653:SF1">
    <property type="entry name" value="FLAGELLAR HOOK-BASAL BODY COMPLEX PROTEIN FLIE"/>
    <property type="match status" value="1"/>
</dbReference>
<dbReference type="Pfam" id="PF02049">
    <property type="entry name" value="FliE"/>
    <property type="match status" value="1"/>
</dbReference>
<keyword id="KW-0975">Bacterial flagellum</keyword>
<keyword id="KW-1185">Reference proteome</keyword>